<sequence length="158" mass="17145">MLRIGQGFDVHQLTEGRPLIIGGVTIPYEKGLLGHSDADVLLHTVADACLGAIAEGDIGRHFPDTDPEFKDADSFQLLQHVWALVKEKGYTLVNIDCTIMAQKPKMAPYIQPMCEKIAEALEADVTQVNVKATTTEKLGFTGRGEGIASQATVLLQKK</sequence>
<keyword id="KW-0414">Isoprene biosynthesis</keyword>
<keyword id="KW-0456">Lyase</keyword>
<keyword id="KW-0479">Metal-binding</keyword>
<comment type="function">
    <text evidence="1">Involved in the biosynthesis of isopentenyl diphosphate (IPP) and dimethylallyl diphosphate (DMAPP), two major building blocks of isoprenoid compounds. Catalyzes the conversion of 4-diphosphocytidyl-2-C-methyl-D-erythritol 2-phosphate (CDP-ME2P) to 2-C-methyl-D-erythritol 2,4-cyclodiphosphate (ME-CPP) with a corresponding release of cytidine 5-monophosphate (CMP).</text>
</comment>
<comment type="catalytic activity">
    <reaction evidence="1">
        <text>4-CDP-2-C-methyl-D-erythritol 2-phosphate = 2-C-methyl-D-erythritol 2,4-cyclic diphosphate + CMP</text>
        <dbReference type="Rhea" id="RHEA:23864"/>
        <dbReference type="ChEBI" id="CHEBI:57919"/>
        <dbReference type="ChEBI" id="CHEBI:58483"/>
        <dbReference type="ChEBI" id="CHEBI:60377"/>
        <dbReference type="EC" id="4.6.1.12"/>
    </reaction>
</comment>
<comment type="cofactor">
    <cofactor evidence="1">
        <name>a divalent metal cation</name>
        <dbReference type="ChEBI" id="CHEBI:60240"/>
    </cofactor>
    <text evidence="1">Binds 1 divalent metal cation per subunit.</text>
</comment>
<comment type="pathway">
    <text evidence="1">Isoprenoid biosynthesis; isopentenyl diphosphate biosynthesis via DXP pathway; isopentenyl diphosphate from 1-deoxy-D-xylulose 5-phosphate: step 4/6.</text>
</comment>
<comment type="subunit">
    <text evidence="1">Homotrimer.</text>
</comment>
<comment type="similarity">
    <text evidence="1">Belongs to the IspF family.</text>
</comment>
<accession>A8F959</accession>
<name>ISPF_BACP2</name>
<protein>
    <recommendedName>
        <fullName evidence="1">2-C-methyl-D-erythritol 2,4-cyclodiphosphate synthase</fullName>
        <shortName evidence="1">MECDP-synthase</shortName>
        <shortName evidence="1">MECPP-synthase</shortName>
        <shortName evidence="1">MECPS</shortName>
        <ecNumber evidence="1">4.6.1.12</ecNumber>
    </recommendedName>
</protein>
<reference key="1">
    <citation type="journal article" date="2007" name="PLoS ONE">
        <title>Paradoxical DNA repair and peroxide resistance gene conservation in Bacillus pumilus SAFR-032.</title>
        <authorList>
            <person name="Gioia J."/>
            <person name="Yerrapragada S."/>
            <person name="Qin X."/>
            <person name="Jiang H."/>
            <person name="Igboeli O.C."/>
            <person name="Muzny D."/>
            <person name="Dugan-Rocha S."/>
            <person name="Ding Y."/>
            <person name="Hawes A."/>
            <person name="Liu W."/>
            <person name="Perez L."/>
            <person name="Kovar C."/>
            <person name="Dinh H."/>
            <person name="Lee S."/>
            <person name="Nazareth L."/>
            <person name="Blyth P."/>
            <person name="Holder M."/>
            <person name="Buhay C."/>
            <person name="Tirumalai M.R."/>
            <person name="Liu Y."/>
            <person name="Dasgupta I."/>
            <person name="Bokhetache L."/>
            <person name="Fujita M."/>
            <person name="Karouia F."/>
            <person name="Eswara Moorthy P."/>
            <person name="Siefert J."/>
            <person name="Uzman A."/>
            <person name="Buzumbo P."/>
            <person name="Verma A."/>
            <person name="Zwiya H."/>
            <person name="McWilliams B.D."/>
            <person name="Olowu A."/>
            <person name="Clinkenbeard K.D."/>
            <person name="Newcombe D."/>
            <person name="Golebiewski L."/>
            <person name="Petrosino J.F."/>
            <person name="Nicholson W.L."/>
            <person name="Fox G.E."/>
            <person name="Venkateswaran K."/>
            <person name="Highlander S.K."/>
            <person name="Weinstock G.M."/>
        </authorList>
    </citation>
    <scope>NUCLEOTIDE SEQUENCE [LARGE SCALE GENOMIC DNA]</scope>
    <source>
        <strain>SAFR-032</strain>
    </source>
</reference>
<organism>
    <name type="scientific">Bacillus pumilus (strain SAFR-032)</name>
    <dbReference type="NCBI Taxonomy" id="315750"/>
    <lineage>
        <taxon>Bacteria</taxon>
        <taxon>Bacillati</taxon>
        <taxon>Bacillota</taxon>
        <taxon>Bacilli</taxon>
        <taxon>Bacillales</taxon>
        <taxon>Bacillaceae</taxon>
        <taxon>Bacillus</taxon>
    </lineage>
</organism>
<evidence type="ECO:0000255" key="1">
    <source>
        <dbReference type="HAMAP-Rule" id="MF_00107"/>
    </source>
</evidence>
<proteinExistence type="inferred from homology"/>
<gene>
    <name evidence="1" type="primary">ispF</name>
    <name type="ordered locus">BPUM_0076</name>
</gene>
<feature type="chain" id="PRO_1000057707" description="2-C-methyl-D-erythritol 2,4-cyclodiphosphate synthase">
    <location>
        <begin position="1"/>
        <end position="158"/>
    </location>
</feature>
<feature type="binding site" evidence="1">
    <location>
        <begin position="9"/>
        <end position="11"/>
    </location>
    <ligand>
        <name>4-CDP-2-C-methyl-D-erythritol 2-phosphate</name>
        <dbReference type="ChEBI" id="CHEBI:57919"/>
    </ligand>
</feature>
<feature type="binding site" evidence="1">
    <location>
        <position position="9"/>
    </location>
    <ligand>
        <name>a divalent metal cation</name>
        <dbReference type="ChEBI" id="CHEBI:60240"/>
    </ligand>
</feature>
<feature type="binding site" evidence="1">
    <location>
        <position position="11"/>
    </location>
    <ligand>
        <name>a divalent metal cation</name>
        <dbReference type="ChEBI" id="CHEBI:60240"/>
    </ligand>
</feature>
<feature type="binding site" evidence="1">
    <location>
        <begin position="35"/>
        <end position="36"/>
    </location>
    <ligand>
        <name>4-CDP-2-C-methyl-D-erythritol 2-phosphate</name>
        <dbReference type="ChEBI" id="CHEBI:57919"/>
    </ligand>
</feature>
<feature type="binding site" evidence="1">
    <location>
        <position position="43"/>
    </location>
    <ligand>
        <name>a divalent metal cation</name>
        <dbReference type="ChEBI" id="CHEBI:60240"/>
    </ligand>
</feature>
<feature type="binding site" evidence="1">
    <location>
        <begin position="57"/>
        <end position="59"/>
    </location>
    <ligand>
        <name>4-CDP-2-C-methyl-D-erythritol 2-phosphate</name>
        <dbReference type="ChEBI" id="CHEBI:57919"/>
    </ligand>
</feature>
<feature type="binding site" evidence="1">
    <location>
        <begin position="62"/>
        <end position="66"/>
    </location>
    <ligand>
        <name>4-CDP-2-C-methyl-D-erythritol 2-phosphate</name>
        <dbReference type="ChEBI" id="CHEBI:57919"/>
    </ligand>
</feature>
<feature type="binding site" evidence="1">
    <location>
        <begin position="101"/>
        <end position="107"/>
    </location>
    <ligand>
        <name>4-CDP-2-C-methyl-D-erythritol 2-phosphate</name>
        <dbReference type="ChEBI" id="CHEBI:57919"/>
    </ligand>
</feature>
<feature type="binding site" evidence="1">
    <location>
        <begin position="133"/>
        <end position="136"/>
    </location>
    <ligand>
        <name>4-CDP-2-C-methyl-D-erythritol 2-phosphate</name>
        <dbReference type="ChEBI" id="CHEBI:57919"/>
    </ligand>
</feature>
<feature type="binding site" evidence="1">
    <location>
        <position position="140"/>
    </location>
    <ligand>
        <name>4-CDP-2-C-methyl-D-erythritol 2-phosphate</name>
        <dbReference type="ChEBI" id="CHEBI:57919"/>
    </ligand>
</feature>
<feature type="binding site" evidence="1">
    <location>
        <position position="143"/>
    </location>
    <ligand>
        <name>4-CDP-2-C-methyl-D-erythritol 2-phosphate</name>
        <dbReference type="ChEBI" id="CHEBI:57919"/>
    </ligand>
</feature>
<feature type="site" description="Transition state stabilizer" evidence="1">
    <location>
        <position position="35"/>
    </location>
</feature>
<feature type="site" description="Transition state stabilizer" evidence="1">
    <location>
        <position position="134"/>
    </location>
</feature>
<dbReference type="EC" id="4.6.1.12" evidence="1"/>
<dbReference type="EMBL" id="CP000813">
    <property type="protein sequence ID" value="ABV60776.1"/>
    <property type="molecule type" value="Genomic_DNA"/>
</dbReference>
<dbReference type="RefSeq" id="WP_012008689.1">
    <property type="nucleotide sequence ID" value="NZ_VEIS01000020.1"/>
</dbReference>
<dbReference type="SMR" id="A8F959"/>
<dbReference type="STRING" id="315750.BPUM_0076"/>
<dbReference type="GeneID" id="5619320"/>
<dbReference type="KEGG" id="bpu:BPUM_0076"/>
<dbReference type="eggNOG" id="COG0245">
    <property type="taxonomic scope" value="Bacteria"/>
</dbReference>
<dbReference type="HOGENOM" id="CLU_084630_2_0_9"/>
<dbReference type="OrthoDB" id="9804336at2"/>
<dbReference type="UniPathway" id="UPA00056">
    <property type="reaction ID" value="UER00095"/>
</dbReference>
<dbReference type="Proteomes" id="UP000001355">
    <property type="component" value="Chromosome"/>
</dbReference>
<dbReference type="GO" id="GO:0008685">
    <property type="term" value="F:2-C-methyl-D-erythritol 2,4-cyclodiphosphate synthase activity"/>
    <property type="evidence" value="ECO:0007669"/>
    <property type="project" value="UniProtKB-UniRule"/>
</dbReference>
<dbReference type="GO" id="GO:0046872">
    <property type="term" value="F:metal ion binding"/>
    <property type="evidence" value="ECO:0007669"/>
    <property type="project" value="UniProtKB-KW"/>
</dbReference>
<dbReference type="GO" id="GO:0019288">
    <property type="term" value="P:isopentenyl diphosphate biosynthetic process, methylerythritol 4-phosphate pathway"/>
    <property type="evidence" value="ECO:0007669"/>
    <property type="project" value="UniProtKB-UniRule"/>
</dbReference>
<dbReference type="GO" id="GO:0016114">
    <property type="term" value="P:terpenoid biosynthetic process"/>
    <property type="evidence" value="ECO:0007669"/>
    <property type="project" value="InterPro"/>
</dbReference>
<dbReference type="CDD" id="cd00554">
    <property type="entry name" value="MECDP_synthase"/>
    <property type="match status" value="1"/>
</dbReference>
<dbReference type="FunFam" id="3.30.1330.50:FF:000001">
    <property type="entry name" value="2-C-methyl-D-erythritol 2,4-cyclodiphosphate synthase"/>
    <property type="match status" value="1"/>
</dbReference>
<dbReference type="Gene3D" id="3.30.1330.50">
    <property type="entry name" value="2-C-methyl-D-erythritol 2,4-cyclodiphosphate synthase"/>
    <property type="match status" value="1"/>
</dbReference>
<dbReference type="HAMAP" id="MF_00107">
    <property type="entry name" value="IspF"/>
    <property type="match status" value="1"/>
</dbReference>
<dbReference type="InterPro" id="IPR003526">
    <property type="entry name" value="MECDP_synthase"/>
</dbReference>
<dbReference type="InterPro" id="IPR020555">
    <property type="entry name" value="MECDP_synthase_CS"/>
</dbReference>
<dbReference type="InterPro" id="IPR036571">
    <property type="entry name" value="MECDP_synthase_sf"/>
</dbReference>
<dbReference type="NCBIfam" id="TIGR00151">
    <property type="entry name" value="ispF"/>
    <property type="match status" value="1"/>
</dbReference>
<dbReference type="PANTHER" id="PTHR43181">
    <property type="entry name" value="2-C-METHYL-D-ERYTHRITOL 2,4-CYCLODIPHOSPHATE SYNTHASE, CHLOROPLASTIC"/>
    <property type="match status" value="1"/>
</dbReference>
<dbReference type="PANTHER" id="PTHR43181:SF1">
    <property type="entry name" value="2-C-METHYL-D-ERYTHRITOL 2,4-CYCLODIPHOSPHATE SYNTHASE, CHLOROPLASTIC"/>
    <property type="match status" value="1"/>
</dbReference>
<dbReference type="Pfam" id="PF02542">
    <property type="entry name" value="YgbB"/>
    <property type="match status" value="1"/>
</dbReference>
<dbReference type="SUPFAM" id="SSF69765">
    <property type="entry name" value="IpsF-like"/>
    <property type="match status" value="1"/>
</dbReference>
<dbReference type="PROSITE" id="PS01350">
    <property type="entry name" value="ISPF"/>
    <property type="match status" value="1"/>
</dbReference>